<organism>
    <name type="scientific">Alcanivorax borkumensis (strain ATCC 700651 / DSM 11573 / NCIMB 13689 / SK2)</name>
    <dbReference type="NCBI Taxonomy" id="393595"/>
    <lineage>
        <taxon>Bacteria</taxon>
        <taxon>Pseudomonadati</taxon>
        <taxon>Pseudomonadota</taxon>
        <taxon>Gammaproteobacteria</taxon>
        <taxon>Oceanospirillales</taxon>
        <taxon>Alcanivoracaceae</taxon>
        <taxon>Alcanivorax</taxon>
    </lineage>
</organism>
<reference key="1">
    <citation type="journal article" date="2006" name="Nat. Biotechnol.">
        <title>Genome sequence of the ubiquitous hydrocarbon-degrading marine bacterium Alcanivorax borkumensis.</title>
        <authorList>
            <person name="Schneiker S."/>
            <person name="Martins dos Santos V.A.P."/>
            <person name="Bartels D."/>
            <person name="Bekel T."/>
            <person name="Brecht M."/>
            <person name="Buhrmester J."/>
            <person name="Chernikova T.N."/>
            <person name="Denaro R."/>
            <person name="Ferrer M."/>
            <person name="Gertler C."/>
            <person name="Goesmann A."/>
            <person name="Golyshina O.V."/>
            <person name="Kaminski F."/>
            <person name="Khachane A.N."/>
            <person name="Lang S."/>
            <person name="Linke B."/>
            <person name="McHardy A.C."/>
            <person name="Meyer F."/>
            <person name="Nechitaylo T."/>
            <person name="Puehler A."/>
            <person name="Regenhardt D."/>
            <person name="Rupp O."/>
            <person name="Sabirova J.S."/>
            <person name="Selbitschka W."/>
            <person name="Yakimov M.M."/>
            <person name="Timmis K.N."/>
            <person name="Vorhoelter F.-J."/>
            <person name="Weidner S."/>
            <person name="Kaiser O."/>
            <person name="Golyshin P.N."/>
        </authorList>
    </citation>
    <scope>NUCLEOTIDE SEQUENCE [LARGE SCALE GENOMIC DNA]</scope>
    <source>
        <strain>ATCC 700651 / DSM 11573 / NCIMB 13689 / SK2</strain>
    </source>
</reference>
<protein>
    <recommendedName>
        <fullName evidence="1">Argininosuccinate synthase</fullName>
        <ecNumber evidence="1">6.3.4.5</ecNumber>
    </recommendedName>
    <alternativeName>
        <fullName evidence="1">Citrulline--aspartate ligase</fullName>
    </alternativeName>
</protein>
<keyword id="KW-0028">Amino-acid biosynthesis</keyword>
<keyword id="KW-0055">Arginine biosynthesis</keyword>
<keyword id="KW-0067">ATP-binding</keyword>
<keyword id="KW-0963">Cytoplasm</keyword>
<keyword id="KW-0436">Ligase</keyword>
<keyword id="KW-0547">Nucleotide-binding</keyword>
<keyword id="KW-1185">Reference proteome</keyword>
<gene>
    <name evidence="1" type="primary">argG</name>
    <name type="ordered locus">ABO_0725</name>
</gene>
<proteinExistence type="inferred from homology"/>
<accession>Q0VRM5</accession>
<comment type="catalytic activity">
    <reaction evidence="1">
        <text>L-citrulline + L-aspartate + ATP = 2-(N(omega)-L-arginino)succinate + AMP + diphosphate + H(+)</text>
        <dbReference type="Rhea" id="RHEA:10932"/>
        <dbReference type="ChEBI" id="CHEBI:15378"/>
        <dbReference type="ChEBI" id="CHEBI:29991"/>
        <dbReference type="ChEBI" id="CHEBI:30616"/>
        <dbReference type="ChEBI" id="CHEBI:33019"/>
        <dbReference type="ChEBI" id="CHEBI:57472"/>
        <dbReference type="ChEBI" id="CHEBI:57743"/>
        <dbReference type="ChEBI" id="CHEBI:456215"/>
        <dbReference type="EC" id="6.3.4.5"/>
    </reaction>
</comment>
<comment type="pathway">
    <text evidence="1">Amino-acid biosynthesis; L-arginine biosynthesis; L-arginine from L-ornithine and carbamoyl phosphate: step 2/3.</text>
</comment>
<comment type="subunit">
    <text evidence="1">Homotetramer.</text>
</comment>
<comment type="subcellular location">
    <subcellularLocation>
        <location evidence="1">Cytoplasm</location>
    </subcellularLocation>
</comment>
<comment type="similarity">
    <text evidence="1">Belongs to the argininosuccinate synthase family. Type 1 subfamily.</text>
</comment>
<evidence type="ECO:0000255" key="1">
    <source>
        <dbReference type="HAMAP-Rule" id="MF_00005"/>
    </source>
</evidence>
<name>ASSY_ALCBS</name>
<sequence>MSKINKVVLAYSGGLDTSVIVKWLQDTYDCEVVTFTADIGQGEEVEPARAKAEAMGVKEIYIEDLREEFVRDYVFPMFRANAIYEGEYLLGTSIARPLIAKRLVEIAEETGADAISHGATGKGNDQVRFELGAYALAPGIQVIAPWREWDLNSREKLMAYCEERNIPVDFSNKKKKSPYSMDANLLHISYEGGNLEDPWWEAEEDMWRWSVSPEAAPDQATYITLGFEKGDIVSIDGETLSPADVLTKLNKLGGDNGIGRLDIVENRYVGMKSRGCYETPGGTIMLPAHRAIESLTLDRESAHLKDSVMPKYAELLYNGYWWSPERLALQKLIDATQEHVNGEVRLKLYKGSVTVVGRRSDNDSLFDASIATFEDDAGAYDQKDAEGFIKLNALRLRIAAKTGRKLS</sequence>
<dbReference type="EC" id="6.3.4.5" evidence="1"/>
<dbReference type="EMBL" id="AM286690">
    <property type="protein sequence ID" value="CAL16173.1"/>
    <property type="molecule type" value="Genomic_DNA"/>
</dbReference>
<dbReference type="RefSeq" id="WP_011588009.1">
    <property type="nucleotide sequence ID" value="NC_008260.1"/>
</dbReference>
<dbReference type="SMR" id="Q0VRM5"/>
<dbReference type="STRING" id="393595.ABO_0725"/>
<dbReference type="KEGG" id="abo:ABO_0725"/>
<dbReference type="eggNOG" id="COG0137">
    <property type="taxonomic scope" value="Bacteria"/>
</dbReference>
<dbReference type="HOGENOM" id="CLU_032784_4_2_6"/>
<dbReference type="OrthoDB" id="9801641at2"/>
<dbReference type="UniPathway" id="UPA00068">
    <property type="reaction ID" value="UER00113"/>
</dbReference>
<dbReference type="Proteomes" id="UP000008871">
    <property type="component" value="Chromosome"/>
</dbReference>
<dbReference type="GO" id="GO:0005737">
    <property type="term" value="C:cytoplasm"/>
    <property type="evidence" value="ECO:0007669"/>
    <property type="project" value="UniProtKB-SubCell"/>
</dbReference>
<dbReference type="GO" id="GO:0004055">
    <property type="term" value="F:argininosuccinate synthase activity"/>
    <property type="evidence" value="ECO:0007669"/>
    <property type="project" value="UniProtKB-UniRule"/>
</dbReference>
<dbReference type="GO" id="GO:0005524">
    <property type="term" value="F:ATP binding"/>
    <property type="evidence" value="ECO:0007669"/>
    <property type="project" value="UniProtKB-UniRule"/>
</dbReference>
<dbReference type="GO" id="GO:0000053">
    <property type="term" value="P:argininosuccinate metabolic process"/>
    <property type="evidence" value="ECO:0007669"/>
    <property type="project" value="TreeGrafter"/>
</dbReference>
<dbReference type="GO" id="GO:0006526">
    <property type="term" value="P:L-arginine biosynthetic process"/>
    <property type="evidence" value="ECO:0007669"/>
    <property type="project" value="UniProtKB-UniRule"/>
</dbReference>
<dbReference type="GO" id="GO:0000050">
    <property type="term" value="P:urea cycle"/>
    <property type="evidence" value="ECO:0007669"/>
    <property type="project" value="TreeGrafter"/>
</dbReference>
<dbReference type="CDD" id="cd01999">
    <property type="entry name" value="ASS"/>
    <property type="match status" value="1"/>
</dbReference>
<dbReference type="FunFam" id="1.20.5.470:FF:000001">
    <property type="entry name" value="Argininosuccinate synthase"/>
    <property type="match status" value="1"/>
</dbReference>
<dbReference type="FunFam" id="3.40.50.620:FF:000019">
    <property type="entry name" value="Argininosuccinate synthase"/>
    <property type="match status" value="1"/>
</dbReference>
<dbReference type="FunFam" id="3.90.1260.10:FF:000007">
    <property type="entry name" value="Argininosuccinate synthase"/>
    <property type="match status" value="1"/>
</dbReference>
<dbReference type="Gene3D" id="3.90.1260.10">
    <property type="entry name" value="Argininosuccinate synthetase, chain A, domain 2"/>
    <property type="match status" value="1"/>
</dbReference>
<dbReference type="Gene3D" id="3.40.50.620">
    <property type="entry name" value="HUPs"/>
    <property type="match status" value="1"/>
</dbReference>
<dbReference type="Gene3D" id="1.20.5.470">
    <property type="entry name" value="Single helix bin"/>
    <property type="match status" value="1"/>
</dbReference>
<dbReference type="HAMAP" id="MF_00005">
    <property type="entry name" value="Arg_succ_synth_type1"/>
    <property type="match status" value="1"/>
</dbReference>
<dbReference type="InterPro" id="IPR048268">
    <property type="entry name" value="Arginosuc_syn_C"/>
</dbReference>
<dbReference type="InterPro" id="IPR048267">
    <property type="entry name" value="Arginosuc_syn_N"/>
</dbReference>
<dbReference type="InterPro" id="IPR001518">
    <property type="entry name" value="Arginosuc_synth"/>
</dbReference>
<dbReference type="InterPro" id="IPR018223">
    <property type="entry name" value="Arginosuc_synth_CS"/>
</dbReference>
<dbReference type="InterPro" id="IPR023434">
    <property type="entry name" value="Arginosuc_synth_type_1_subfam"/>
</dbReference>
<dbReference type="InterPro" id="IPR024074">
    <property type="entry name" value="AS_cat/multimer_dom_body"/>
</dbReference>
<dbReference type="InterPro" id="IPR014729">
    <property type="entry name" value="Rossmann-like_a/b/a_fold"/>
</dbReference>
<dbReference type="NCBIfam" id="TIGR00032">
    <property type="entry name" value="argG"/>
    <property type="match status" value="1"/>
</dbReference>
<dbReference type="NCBIfam" id="NF001770">
    <property type="entry name" value="PRK00509.1"/>
    <property type="match status" value="1"/>
</dbReference>
<dbReference type="PANTHER" id="PTHR11587">
    <property type="entry name" value="ARGININOSUCCINATE SYNTHASE"/>
    <property type="match status" value="1"/>
</dbReference>
<dbReference type="PANTHER" id="PTHR11587:SF2">
    <property type="entry name" value="ARGININOSUCCINATE SYNTHASE"/>
    <property type="match status" value="1"/>
</dbReference>
<dbReference type="Pfam" id="PF20979">
    <property type="entry name" value="Arginosuc_syn_C"/>
    <property type="match status" value="1"/>
</dbReference>
<dbReference type="Pfam" id="PF00764">
    <property type="entry name" value="Arginosuc_synth"/>
    <property type="match status" value="1"/>
</dbReference>
<dbReference type="SUPFAM" id="SSF52402">
    <property type="entry name" value="Adenine nucleotide alpha hydrolases-like"/>
    <property type="match status" value="1"/>
</dbReference>
<dbReference type="SUPFAM" id="SSF69864">
    <property type="entry name" value="Argininosuccinate synthetase, C-terminal domain"/>
    <property type="match status" value="1"/>
</dbReference>
<dbReference type="PROSITE" id="PS00564">
    <property type="entry name" value="ARGININOSUCCIN_SYN_1"/>
    <property type="match status" value="1"/>
</dbReference>
<dbReference type="PROSITE" id="PS00565">
    <property type="entry name" value="ARGININOSUCCIN_SYN_2"/>
    <property type="match status" value="1"/>
</dbReference>
<feature type="chain" id="PRO_0000263904" description="Argininosuccinate synthase">
    <location>
        <begin position="1"/>
        <end position="407"/>
    </location>
</feature>
<feature type="binding site" evidence="1">
    <location>
        <begin position="10"/>
        <end position="18"/>
    </location>
    <ligand>
        <name>ATP</name>
        <dbReference type="ChEBI" id="CHEBI:30616"/>
    </ligand>
</feature>
<feature type="binding site" evidence="1">
    <location>
        <position position="37"/>
    </location>
    <ligand>
        <name>ATP</name>
        <dbReference type="ChEBI" id="CHEBI:30616"/>
    </ligand>
</feature>
<feature type="binding site" evidence="1">
    <location>
        <position position="88"/>
    </location>
    <ligand>
        <name>L-citrulline</name>
        <dbReference type="ChEBI" id="CHEBI:57743"/>
    </ligand>
</feature>
<feature type="binding site" evidence="1">
    <location>
        <position position="93"/>
    </location>
    <ligand>
        <name>L-citrulline</name>
        <dbReference type="ChEBI" id="CHEBI:57743"/>
    </ligand>
</feature>
<feature type="binding site" evidence="1">
    <location>
        <position position="118"/>
    </location>
    <ligand>
        <name>ATP</name>
        <dbReference type="ChEBI" id="CHEBI:30616"/>
    </ligand>
</feature>
<feature type="binding site" evidence="1">
    <location>
        <position position="120"/>
    </location>
    <ligand>
        <name>L-aspartate</name>
        <dbReference type="ChEBI" id="CHEBI:29991"/>
    </ligand>
</feature>
<feature type="binding site" evidence="1">
    <location>
        <position position="124"/>
    </location>
    <ligand>
        <name>L-aspartate</name>
        <dbReference type="ChEBI" id="CHEBI:29991"/>
    </ligand>
</feature>
<feature type="binding site" evidence="1">
    <location>
        <position position="124"/>
    </location>
    <ligand>
        <name>L-citrulline</name>
        <dbReference type="ChEBI" id="CHEBI:57743"/>
    </ligand>
</feature>
<feature type="binding site" evidence="1">
    <location>
        <position position="125"/>
    </location>
    <ligand>
        <name>L-aspartate</name>
        <dbReference type="ChEBI" id="CHEBI:29991"/>
    </ligand>
</feature>
<feature type="binding site" evidence="1">
    <location>
        <position position="128"/>
    </location>
    <ligand>
        <name>L-citrulline</name>
        <dbReference type="ChEBI" id="CHEBI:57743"/>
    </ligand>
</feature>
<feature type="binding site" evidence="1">
    <location>
        <position position="180"/>
    </location>
    <ligand>
        <name>L-citrulline</name>
        <dbReference type="ChEBI" id="CHEBI:57743"/>
    </ligand>
</feature>
<feature type="binding site" evidence="1">
    <location>
        <position position="189"/>
    </location>
    <ligand>
        <name>L-citrulline</name>
        <dbReference type="ChEBI" id="CHEBI:57743"/>
    </ligand>
</feature>
<feature type="binding site" evidence="1">
    <location>
        <position position="265"/>
    </location>
    <ligand>
        <name>L-citrulline</name>
        <dbReference type="ChEBI" id="CHEBI:57743"/>
    </ligand>
</feature>
<feature type="binding site" evidence="1">
    <location>
        <position position="277"/>
    </location>
    <ligand>
        <name>L-citrulline</name>
        <dbReference type="ChEBI" id="CHEBI:57743"/>
    </ligand>
</feature>